<feature type="propeptide" id="PRO_0000333628" evidence="2">
    <location>
        <begin position="1"/>
        <end status="unknown"/>
    </location>
</feature>
<feature type="chain" id="PRO_0000333629" description="Metacaspase-1A">
    <location>
        <begin status="unknown"/>
        <end position="419"/>
    </location>
</feature>
<feature type="region of interest" description="Disordered" evidence="3">
    <location>
        <begin position="1"/>
        <end position="89"/>
    </location>
</feature>
<feature type="compositionally biased region" description="Polar residues" evidence="3">
    <location>
        <begin position="41"/>
        <end position="51"/>
    </location>
</feature>
<feature type="compositionally biased region" description="Low complexity" evidence="3">
    <location>
        <begin position="59"/>
        <end position="71"/>
    </location>
</feature>
<feature type="active site" evidence="1">
    <location>
        <position position="190"/>
    </location>
</feature>
<feature type="active site" evidence="1">
    <location>
        <position position="246"/>
    </location>
</feature>
<comment type="function">
    <text evidence="1">Involved in cell death (apoptosis).</text>
</comment>
<comment type="similarity">
    <text evidence="4">Belongs to the peptidase C14B family.</text>
</comment>
<comment type="sequence caution" evidence="4">
    <conflict type="erroneous initiation">
        <sequence resource="EMBL-CDS" id="BAE56984"/>
    </conflict>
    <text>Extended N-terminus.</text>
</comment>
<dbReference type="EC" id="3.4.22.-"/>
<dbReference type="EMBL" id="BA000050">
    <property type="protein sequence ID" value="BAE56984.1"/>
    <property type="status" value="ALT_INIT"/>
    <property type="molecule type" value="Genomic_DNA"/>
</dbReference>
<dbReference type="SMR" id="Q2UN81"/>
<dbReference type="STRING" id="510516.Q2UN81"/>
<dbReference type="MEROPS" id="C14.035"/>
<dbReference type="EnsemblFungi" id="BAE56984">
    <property type="protein sequence ID" value="BAE56984"/>
    <property type="gene ID" value="AO090001000470"/>
</dbReference>
<dbReference type="Proteomes" id="UP000006564">
    <property type="component" value="Chromosome 2"/>
</dbReference>
<dbReference type="GO" id="GO:0005737">
    <property type="term" value="C:cytoplasm"/>
    <property type="evidence" value="ECO:0007669"/>
    <property type="project" value="TreeGrafter"/>
</dbReference>
<dbReference type="GO" id="GO:0004197">
    <property type="term" value="F:cysteine-type endopeptidase activity"/>
    <property type="evidence" value="ECO:0007669"/>
    <property type="project" value="InterPro"/>
</dbReference>
<dbReference type="GO" id="GO:0006915">
    <property type="term" value="P:apoptotic process"/>
    <property type="evidence" value="ECO:0007669"/>
    <property type="project" value="UniProtKB-KW"/>
</dbReference>
<dbReference type="GO" id="GO:0006508">
    <property type="term" value="P:proteolysis"/>
    <property type="evidence" value="ECO:0007669"/>
    <property type="project" value="UniProtKB-KW"/>
</dbReference>
<dbReference type="Gene3D" id="3.40.50.12660">
    <property type="match status" value="1"/>
</dbReference>
<dbReference type="InterPro" id="IPR029030">
    <property type="entry name" value="Caspase-like_dom_sf"/>
</dbReference>
<dbReference type="InterPro" id="IPR050452">
    <property type="entry name" value="Metacaspase"/>
</dbReference>
<dbReference type="InterPro" id="IPR011600">
    <property type="entry name" value="Pept_C14_caspase"/>
</dbReference>
<dbReference type="PANTHER" id="PTHR48104:SF30">
    <property type="entry name" value="METACASPASE-1"/>
    <property type="match status" value="1"/>
</dbReference>
<dbReference type="PANTHER" id="PTHR48104">
    <property type="entry name" value="METACASPASE-4"/>
    <property type="match status" value="1"/>
</dbReference>
<dbReference type="Pfam" id="PF00656">
    <property type="entry name" value="Peptidase_C14"/>
    <property type="match status" value="1"/>
</dbReference>
<dbReference type="SUPFAM" id="SSF52129">
    <property type="entry name" value="Caspase-like"/>
    <property type="match status" value="1"/>
</dbReference>
<keyword id="KW-0053">Apoptosis</keyword>
<keyword id="KW-0378">Hydrolase</keyword>
<keyword id="KW-0645">Protease</keyword>
<keyword id="KW-1185">Reference proteome</keyword>
<keyword id="KW-0788">Thiol protease</keyword>
<keyword id="KW-0865">Zymogen</keyword>
<sequence length="419" mass="46374">MHHQQSSYGGGYPGQAYRQQQPNNAYGYGQPSPQPYGSHHNGYNSPQQNYGPPSGGHMYQQQSAYQNSYNQGGHGIPARPPDQPVSFGQGAPQEYAYRYSACTGTRKALLIGINYFNQKGQLRGCINDVKNMSTYLHENFGYPRENMVLLTDDQQNPKSQPTKANILRAMHWLVKDAKPNDSLFFHYSGHGGQTPDLDGDEDDGYDEVIYPVDFRQAGHIVDDEMHRIMVNPLQPGVRLTAIFDSCHSGSALDLPYIYSTQGILKEPNLAKEAGQGLLGVVSAYARGDMGSMVSTAVGFFKKATKGDEVYERNKQTKTSGADVIMWSGSKDDQTSQDAQIQGQATGAMSWAFISALRKNPQQSYVQLLNSIRDELSTKYTQKPQLSCSHPLGDLIDVPVLGSGFIWFWVLSIFQCQATK</sequence>
<name>MCA1A_ASPOR</name>
<evidence type="ECO:0000250" key="1"/>
<evidence type="ECO:0000255" key="2"/>
<evidence type="ECO:0000256" key="3">
    <source>
        <dbReference type="SAM" id="MobiDB-lite"/>
    </source>
</evidence>
<evidence type="ECO:0000305" key="4"/>
<protein>
    <recommendedName>
        <fullName>Metacaspase-1A</fullName>
        <ecNumber>3.4.22.-</ecNumber>
    </recommendedName>
</protein>
<organism>
    <name type="scientific">Aspergillus oryzae (strain ATCC 42149 / RIB 40)</name>
    <name type="common">Yellow koji mold</name>
    <dbReference type="NCBI Taxonomy" id="510516"/>
    <lineage>
        <taxon>Eukaryota</taxon>
        <taxon>Fungi</taxon>
        <taxon>Dikarya</taxon>
        <taxon>Ascomycota</taxon>
        <taxon>Pezizomycotina</taxon>
        <taxon>Eurotiomycetes</taxon>
        <taxon>Eurotiomycetidae</taxon>
        <taxon>Eurotiales</taxon>
        <taxon>Aspergillaceae</taxon>
        <taxon>Aspergillus</taxon>
        <taxon>Aspergillus subgen. Circumdati</taxon>
    </lineage>
</organism>
<gene>
    <name type="primary">casA</name>
    <name type="ORF">AO090001000470</name>
</gene>
<reference key="1">
    <citation type="journal article" date="2005" name="Nature">
        <title>Genome sequencing and analysis of Aspergillus oryzae.</title>
        <authorList>
            <person name="Machida M."/>
            <person name="Asai K."/>
            <person name="Sano M."/>
            <person name="Tanaka T."/>
            <person name="Kumagai T."/>
            <person name="Terai G."/>
            <person name="Kusumoto K."/>
            <person name="Arima T."/>
            <person name="Akita O."/>
            <person name="Kashiwagi Y."/>
            <person name="Abe K."/>
            <person name="Gomi K."/>
            <person name="Horiuchi H."/>
            <person name="Kitamoto K."/>
            <person name="Kobayashi T."/>
            <person name="Takeuchi M."/>
            <person name="Denning D.W."/>
            <person name="Galagan J.E."/>
            <person name="Nierman W.C."/>
            <person name="Yu J."/>
            <person name="Archer D.B."/>
            <person name="Bennett J.W."/>
            <person name="Bhatnagar D."/>
            <person name="Cleveland T.E."/>
            <person name="Fedorova N.D."/>
            <person name="Gotoh O."/>
            <person name="Horikawa H."/>
            <person name="Hosoyama A."/>
            <person name="Ichinomiya M."/>
            <person name="Igarashi R."/>
            <person name="Iwashita K."/>
            <person name="Juvvadi P.R."/>
            <person name="Kato M."/>
            <person name="Kato Y."/>
            <person name="Kin T."/>
            <person name="Kokubun A."/>
            <person name="Maeda H."/>
            <person name="Maeyama N."/>
            <person name="Maruyama J."/>
            <person name="Nagasaki H."/>
            <person name="Nakajima T."/>
            <person name="Oda K."/>
            <person name="Okada K."/>
            <person name="Paulsen I."/>
            <person name="Sakamoto K."/>
            <person name="Sawano T."/>
            <person name="Takahashi M."/>
            <person name="Takase K."/>
            <person name="Terabayashi Y."/>
            <person name="Wortman J.R."/>
            <person name="Yamada O."/>
            <person name="Yamagata Y."/>
            <person name="Anazawa H."/>
            <person name="Hata Y."/>
            <person name="Koide Y."/>
            <person name="Komori T."/>
            <person name="Koyama Y."/>
            <person name="Minetoki T."/>
            <person name="Suharnan S."/>
            <person name="Tanaka A."/>
            <person name="Isono K."/>
            <person name="Kuhara S."/>
            <person name="Ogasawara N."/>
            <person name="Kikuchi H."/>
        </authorList>
    </citation>
    <scope>NUCLEOTIDE SEQUENCE [LARGE SCALE GENOMIC DNA]</scope>
    <source>
        <strain>ATCC 42149 / RIB 40</strain>
    </source>
</reference>
<proteinExistence type="inferred from homology"/>
<accession>Q2UN81</accession>